<comment type="function">
    <text evidence="2">Component of the cytochrome b6-f complex, which mediates electron transfer between photosystem II (PSII) and photosystem I (PSI), cyclic electron flow around PSI, and state transitions.</text>
</comment>
<comment type="subunit">
    <text evidence="1">The 4 large subunits of the cytochrome b6-f complex are cytochrome b6, subunit IV (17 kDa polypeptide, petD), cytochrome f and the Rieske protein, while the 4 small subunits are petG, petL, petM and petN. The complex functions as a dimer (By similarity).</text>
</comment>
<comment type="subcellular location">
    <subcellularLocation>
        <location evidence="2">Plastid</location>
        <location evidence="2">Chloroplast thylakoid membrane</location>
        <topology evidence="2">Multi-pass membrane protein</topology>
    </subcellularLocation>
</comment>
<comment type="similarity">
    <text evidence="2">Belongs to the cytochrome b family. PetD subfamily.</text>
</comment>
<name>PETD_SOLBU</name>
<sequence>MGITKKPDLNDPVLRAKLAKGMGHNYYGEPAWPNDLLYIFPVVILGTIACNVGLAVLEPSMIGEPADPFATPLEILPEWYFFPVFQILRTVPNKLLGVLLMVSVPAGLLTVPFLENVNKFQNPFRRPVATTVFLIGTAVALWLGIGATLPIDKSLTLGLF</sequence>
<proteinExistence type="inferred from homology"/>
<reference key="1">
    <citation type="journal article" date="2006" name="Theor. Appl. Genet.">
        <title>Complete chloroplast genome sequences of Solanum bulbocastanum, Solanum lycopersicum and comparative analyses with other Solanaceae genomes.</title>
        <authorList>
            <person name="Daniell H."/>
            <person name="Lee S.-B."/>
            <person name="Grevich J."/>
            <person name="Saski C."/>
            <person name="Quesada-Vargas T."/>
            <person name="Guda C."/>
            <person name="Tomkins J."/>
            <person name="Jansen R.K."/>
        </authorList>
    </citation>
    <scope>NUCLEOTIDE SEQUENCE [LARGE SCALE GENOMIC DNA]</scope>
    <source>
        <strain>cv. PT29</strain>
    </source>
</reference>
<organism>
    <name type="scientific">Solanum bulbocastanum</name>
    <name type="common">Wild potato</name>
    <dbReference type="NCBI Taxonomy" id="147425"/>
    <lineage>
        <taxon>Eukaryota</taxon>
        <taxon>Viridiplantae</taxon>
        <taxon>Streptophyta</taxon>
        <taxon>Embryophyta</taxon>
        <taxon>Tracheophyta</taxon>
        <taxon>Spermatophyta</taxon>
        <taxon>Magnoliopsida</taxon>
        <taxon>eudicotyledons</taxon>
        <taxon>Gunneridae</taxon>
        <taxon>Pentapetalae</taxon>
        <taxon>asterids</taxon>
        <taxon>lamiids</taxon>
        <taxon>Solanales</taxon>
        <taxon>Solanaceae</taxon>
        <taxon>Solanoideae</taxon>
        <taxon>Solaneae</taxon>
        <taxon>Solanum</taxon>
    </lineage>
</organism>
<protein>
    <recommendedName>
        <fullName evidence="2">Cytochrome b6-f complex subunit 4</fullName>
    </recommendedName>
    <alternativeName>
        <fullName evidence="2">17 kDa polypeptide</fullName>
    </alternativeName>
</protein>
<accession>Q2MIF7</accession>
<feature type="chain" id="PRO_0000255571" description="Cytochrome b6-f complex subunit 4">
    <location>
        <begin position="1"/>
        <end position="160"/>
    </location>
</feature>
<feature type="transmembrane region" description="Helical" evidence="2">
    <location>
        <begin position="36"/>
        <end position="56"/>
    </location>
</feature>
<feature type="transmembrane region" description="Helical" evidence="2">
    <location>
        <begin position="95"/>
        <end position="115"/>
    </location>
</feature>
<feature type="transmembrane region" description="Helical" evidence="2">
    <location>
        <begin position="131"/>
        <end position="151"/>
    </location>
</feature>
<geneLocation type="chloroplast"/>
<dbReference type="EMBL" id="DQ347958">
    <property type="protein sequence ID" value="ABC56243.1"/>
    <property type="molecule type" value="Genomic_DNA"/>
</dbReference>
<dbReference type="RefSeq" id="YP_538880.1">
    <property type="nucleotide sequence ID" value="NC_007943.1"/>
</dbReference>
<dbReference type="SMR" id="Q2MIF7"/>
<dbReference type="GeneID" id="3989523"/>
<dbReference type="GO" id="GO:0009535">
    <property type="term" value="C:chloroplast thylakoid membrane"/>
    <property type="evidence" value="ECO:0007669"/>
    <property type="project" value="UniProtKB-SubCell"/>
</dbReference>
<dbReference type="GO" id="GO:0045158">
    <property type="term" value="F:electron transporter, transferring electrons within cytochrome b6/f complex of photosystem II activity"/>
    <property type="evidence" value="ECO:0007669"/>
    <property type="project" value="UniProtKB-UniRule"/>
</dbReference>
<dbReference type="GO" id="GO:0045156">
    <property type="term" value="F:electron transporter, transferring electrons within the cyclic electron transport pathway of photosynthesis activity"/>
    <property type="evidence" value="ECO:0007669"/>
    <property type="project" value="InterPro"/>
</dbReference>
<dbReference type="GO" id="GO:0016491">
    <property type="term" value="F:oxidoreductase activity"/>
    <property type="evidence" value="ECO:0007669"/>
    <property type="project" value="InterPro"/>
</dbReference>
<dbReference type="GO" id="GO:0009767">
    <property type="term" value="P:photosynthetic electron transport chain"/>
    <property type="evidence" value="ECO:0007669"/>
    <property type="project" value="InterPro"/>
</dbReference>
<dbReference type="CDD" id="cd00290">
    <property type="entry name" value="cytochrome_b_C"/>
    <property type="match status" value="1"/>
</dbReference>
<dbReference type="FunFam" id="1.10.287.980:FF:000001">
    <property type="entry name" value="Cytochrome b6-f complex subunit 4"/>
    <property type="match status" value="1"/>
</dbReference>
<dbReference type="FunFam" id="1.20.5.510:FF:000002">
    <property type="entry name" value="Cytochrome b6-f complex subunit 4"/>
    <property type="match status" value="1"/>
</dbReference>
<dbReference type="Gene3D" id="1.10.287.980">
    <property type="entry name" value="plastocyanin oxidoreductase"/>
    <property type="match status" value="1"/>
</dbReference>
<dbReference type="Gene3D" id="1.20.5.510">
    <property type="entry name" value="Single helix bin"/>
    <property type="match status" value="1"/>
</dbReference>
<dbReference type="HAMAP" id="MF_01344">
    <property type="entry name" value="Cytb6_f_subIV"/>
    <property type="match status" value="1"/>
</dbReference>
<dbReference type="InterPro" id="IPR005798">
    <property type="entry name" value="Cyt_b/b6_C"/>
</dbReference>
<dbReference type="InterPro" id="IPR036150">
    <property type="entry name" value="Cyt_b/b6_C_sf"/>
</dbReference>
<dbReference type="InterPro" id="IPR005870">
    <property type="entry name" value="Cyt_b6/f_cplx_suIV"/>
</dbReference>
<dbReference type="InterPro" id="IPR048260">
    <property type="entry name" value="Cytochrome_b_C_euk/bac"/>
</dbReference>
<dbReference type="NCBIfam" id="TIGR01156">
    <property type="entry name" value="cytb6_f_IV"/>
    <property type="match status" value="1"/>
</dbReference>
<dbReference type="PANTHER" id="PTHR19271">
    <property type="entry name" value="CYTOCHROME B"/>
    <property type="match status" value="1"/>
</dbReference>
<dbReference type="PANTHER" id="PTHR19271:SF16">
    <property type="entry name" value="CYTOCHROME B"/>
    <property type="match status" value="1"/>
</dbReference>
<dbReference type="Pfam" id="PF00032">
    <property type="entry name" value="Cytochrom_B_C"/>
    <property type="match status" value="1"/>
</dbReference>
<dbReference type="PIRSF" id="PIRSF000033">
    <property type="entry name" value="B6f_17K"/>
    <property type="match status" value="1"/>
</dbReference>
<dbReference type="SUPFAM" id="SSF81648">
    <property type="entry name" value="a domain/subunit of cytochrome bc1 complex (Ubiquinol-cytochrome c reductase)"/>
    <property type="match status" value="1"/>
</dbReference>
<dbReference type="PROSITE" id="PS51003">
    <property type="entry name" value="CYTB_CTER"/>
    <property type="match status" value="1"/>
</dbReference>
<evidence type="ECO:0000250" key="1"/>
<evidence type="ECO:0000255" key="2">
    <source>
        <dbReference type="HAMAP-Rule" id="MF_01344"/>
    </source>
</evidence>
<keyword id="KW-0150">Chloroplast</keyword>
<keyword id="KW-0249">Electron transport</keyword>
<keyword id="KW-0472">Membrane</keyword>
<keyword id="KW-0602">Photosynthesis</keyword>
<keyword id="KW-0934">Plastid</keyword>
<keyword id="KW-0793">Thylakoid</keyword>
<keyword id="KW-0812">Transmembrane</keyword>
<keyword id="KW-1133">Transmembrane helix</keyword>
<keyword id="KW-0813">Transport</keyword>
<gene>
    <name evidence="2" type="primary">petD</name>
</gene>